<protein>
    <recommendedName>
        <fullName evidence="1">Inner membrane-spanning protein YciB</fullName>
    </recommendedName>
</protein>
<accession>A7ZL35</accession>
<comment type="function">
    <text evidence="1">Plays a role in cell envelope biogenesis, maintenance of cell envelope integrity and membrane homeostasis.</text>
</comment>
<comment type="subcellular location">
    <subcellularLocation>
        <location evidence="1">Cell inner membrane</location>
        <topology evidence="1">Multi-pass membrane protein</topology>
    </subcellularLocation>
</comment>
<comment type="similarity">
    <text evidence="1">Belongs to the YciB family.</text>
</comment>
<name>YCIB_ECO24</name>
<evidence type="ECO:0000255" key="1">
    <source>
        <dbReference type="HAMAP-Rule" id="MF_00189"/>
    </source>
</evidence>
<proteinExistence type="inferred from homology"/>
<keyword id="KW-0997">Cell inner membrane</keyword>
<keyword id="KW-1003">Cell membrane</keyword>
<keyword id="KW-0472">Membrane</keyword>
<keyword id="KW-1185">Reference proteome</keyword>
<keyword id="KW-0812">Transmembrane</keyword>
<keyword id="KW-1133">Transmembrane helix</keyword>
<dbReference type="EMBL" id="CP000800">
    <property type="protein sequence ID" value="ABV20647.1"/>
    <property type="molecule type" value="Genomic_DNA"/>
</dbReference>
<dbReference type="RefSeq" id="WP_000808667.1">
    <property type="nucleotide sequence ID" value="NC_009801.1"/>
</dbReference>
<dbReference type="KEGG" id="ecw:EcE24377A_1412"/>
<dbReference type="HOGENOM" id="CLU_089554_2_0_6"/>
<dbReference type="Proteomes" id="UP000001122">
    <property type="component" value="Chromosome"/>
</dbReference>
<dbReference type="GO" id="GO:0005886">
    <property type="term" value="C:plasma membrane"/>
    <property type="evidence" value="ECO:0007669"/>
    <property type="project" value="UniProtKB-SubCell"/>
</dbReference>
<dbReference type="HAMAP" id="MF_00189">
    <property type="entry name" value="YciB"/>
    <property type="match status" value="1"/>
</dbReference>
<dbReference type="InterPro" id="IPR006008">
    <property type="entry name" value="YciB"/>
</dbReference>
<dbReference type="NCBIfam" id="TIGR00997">
    <property type="entry name" value="ispZ"/>
    <property type="match status" value="1"/>
</dbReference>
<dbReference type="NCBIfam" id="NF001324">
    <property type="entry name" value="PRK00259.1-2"/>
    <property type="match status" value="1"/>
</dbReference>
<dbReference type="NCBIfam" id="NF001325">
    <property type="entry name" value="PRK00259.1-3"/>
    <property type="match status" value="1"/>
</dbReference>
<dbReference type="NCBIfam" id="NF001326">
    <property type="entry name" value="PRK00259.1-4"/>
    <property type="match status" value="1"/>
</dbReference>
<dbReference type="PANTHER" id="PTHR36917:SF1">
    <property type="entry name" value="INNER MEMBRANE-SPANNING PROTEIN YCIB"/>
    <property type="match status" value="1"/>
</dbReference>
<dbReference type="PANTHER" id="PTHR36917">
    <property type="entry name" value="INTRACELLULAR SEPTATION PROTEIN A-RELATED"/>
    <property type="match status" value="1"/>
</dbReference>
<dbReference type="Pfam" id="PF04279">
    <property type="entry name" value="IspA"/>
    <property type="match status" value="1"/>
</dbReference>
<gene>
    <name evidence="1" type="primary">yciB</name>
    <name type="ordered locus">EcE24377A_1412</name>
</gene>
<reference key="1">
    <citation type="journal article" date="2008" name="J. Bacteriol.">
        <title>The pangenome structure of Escherichia coli: comparative genomic analysis of E. coli commensal and pathogenic isolates.</title>
        <authorList>
            <person name="Rasko D.A."/>
            <person name="Rosovitz M.J."/>
            <person name="Myers G.S.A."/>
            <person name="Mongodin E.F."/>
            <person name="Fricke W.F."/>
            <person name="Gajer P."/>
            <person name="Crabtree J."/>
            <person name="Sebaihia M."/>
            <person name="Thomson N.R."/>
            <person name="Chaudhuri R."/>
            <person name="Henderson I.R."/>
            <person name="Sperandio V."/>
            <person name="Ravel J."/>
        </authorList>
    </citation>
    <scope>NUCLEOTIDE SEQUENCE [LARGE SCALE GENOMIC DNA]</scope>
    <source>
        <strain>E24377A / ETEC</strain>
    </source>
</reference>
<feature type="chain" id="PRO_1000058471" description="Inner membrane-spanning protein YciB">
    <location>
        <begin position="1"/>
        <end position="179"/>
    </location>
</feature>
<feature type="transmembrane region" description="Helical" evidence="1">
    <location>
        <begin position="22"/>
        <end position="42"/>
    </location>
</feature>
<feature type="transmembrane region" description="Helical" evidence="1">
    <location>
        <begin position="50"/>
        <end position="70"/>
    </location>
</feature>
<feature type="transmembrane region" description="Helical" evidence="1">
    <location>
        <begin position="76"/>
        <end position="96"/>
    </location>
</feature>
<feature type="transmembrane region" description="Helical" evidence="1">
    <location>
        <begin position="121"/>
        <end position="141"/>
    </location>
</feature>
<feature type="transmembrane region" description="Helical" evidence="1">
    <location>
        <begin position="149"/>
        <end position="169"/>
    </location>
</feature>
<sequence length="179" mass="20790">MKQFLDFLPLVVFFAFYKIYDIYAATAALIVATAIVLIYSWVRFRKVEKMALITFVLVVVFGGLTLFFHNDEFIKWKVTVIYALFAGALLVSQWVMKKPLIQRMLGKELTLPQPVWSKLNLAWAVFFILCGLANIYIAFWLPQNIWVNFKVFGLTALTLIFTLLSGIYIYRHMPQEDKS</sequence>
<organism>
    <name type="scientific">Escherichia coli O139:H28 (strain E24377A / ETEC)</name>
    <dbReference type="NCBI Taxonomy" id="331111"/>
    <lineage>
        <taxon>Bacteria</taxon>
        <taxon>Pseudomonadati</taxon>
        <taxon>Pseudomonadota</taxon>
        <taxon>Gammaproteobacteria</taxon>
        <taxon>Enterobacterales</taxon>
        <taxon>Enterobacteriaceae</taxon>
        <taxon>Escherichia</taxon>
    </lineage>
</organism>